<feature type="chain" id="PRO_0000130571" description="Protein translation factor SUI1 homolog">
    <location>
        <begin position="1"/>
        <end position="115"/>
    </location>
</feature>
<proteinExistence type="inferred from homology"/>
<gene>
    <name type="primary">GOS2</name>
    <name type="ordered locus">Os07g0529800</name>
    <name type="ordered locus">LOC_Os07g34589</name>
</gene>
<dbReference type="EMBL" id="AF094774">
    <property type="protein sequence ID" value="AAC67556.1"/>
    <property type="molecule type" value="mRNA"/>
</dbReference>
<dbReference type="EMBL" id="AP004674">
    <property type="protein sequence ID" value="BAC45143.1"/>
    <property type="molecule type" value="Genomic_DNA"/>
</dbReference>
<dbReference type="EMBL" id="AP008213">
    <property type="protein sequence ID" value="BAF21757.1"/>
    <property type="molecule type" value="Genomic_DNA"/>
</dbReference>
<dbReference type="EMBL" id="AP014963">
    <property type="protein sequence ID" value="BAT01869.1"/>
    <property type="molecule type" value="Genomic_DNA"/>
</dbReference>
<dbReference type="RefSeq" id="XP_015646619.1">
    <property type="nucleotide sequence ID" value="XM_015791133.1"/>
</dbReference>
<dbReference type="SMR" id="Q0D5W6"/>
<dbReference type="FunCoup" id="Q0D5W6">
    <property type="interactions" value="2711"/>
</dbReference>
<dbReference type="STRING" id="39947.Q0D5W6"/>
<dbReference type="PaxDb" id="39947-Q0D5W6"/>
<dbReference type="EnsemblPlants" id="Os07t0529800-01">
    <property type="protein sequence ID" value="Os07t0529800-01"/>
    <property type="gene ID" value="Os07g0529800"/>
</dbReference>
<dbReference type="Gramene" id="Os07t0529800-01">
    <property type="protein sequence ID" value="Os07t0529800-01"/>
    <property type="gene ID" value="Os07g0529800"/>
</dbReference>
<dbReference type="KEGG" id="dosa:Os07g0529800"/>
<dbReference type="eggNOG" id="KOG1770">
    <property type="taxonomic scope" value="Eukaryota"/>
</dbReference>
<dbReference type="HOGENOM" id="CLU_082805_3_0_1"/>
<dbReference type="InParanoid" id="Q0D5W6"/>
<dbReference type="OMA" id="VENHIHI"/>
<dbReference type="OrthoDB" id="10248435at2759"/>
<dbReference type="Proteomes" id="UP000000763">
    <property type="component" value="Chromosome 7"/>
</dbReference>
<dbReference type="Proteomes" id="UP000059680">
    <property type="component" value="Chromosome 7"/>
</dbReference>
<dbReference type="ExpressionAtlas" id="Q0D5W6">
    <property type="expression patterns" value="baseline and differential"/>
</dbReference>
<dbReference type="GO" id="GO:0003723">
    <property type="term" value="F:RNA binding"/>
    <property type="evidence" value="ECO:0000318"/>
    <property type="project" value="GO_Central"/>
</dbReference>
<dbReference type="GO" id="GO:0003743">
    <property type="term" value="F:translation initiation factor activity"/>
    <property type="evidence" value="ECO:0007669"/>
    <property type="project" value="UniProtKB-KW"/>
</dbReference>
<dbReference type="GO" id="GO:0006417">
    <property type="term" value="P:regulation of translation"/>
    <property type="evidence" value="ECO:0007669"/>
    <property type="project" value="UniProtKB-KW"/>
</dbReference>
<dbReference type="CDD" id="cd11566">
    <property type="entry name" value="eIF1_SUI1"/>
    <property type="match status" value="1"/>
</dbReference>
<dbReference type="FunFam" id="3.30.780.10:FF:000001">
    <property type="entry name" value="Eukaryotic translation initiation factor SUI1"/>
    <property type="match status" value="1"/>
</dbReference>
<dbReference type="Gene3D" id="3.30.780.10">
    <property type="entry name" value="SUI1-like domain"/>
    <property type="match status" value="1"/>
</dbReference>
<dbReference type="InterPro" id="IPR001950">
    <property type="entry name" value="SUI1"/>
</dbReference>
<dbReference type="InterPro" id="IPR036877">
    <property type="entry name" value="SUI1_dom_sf"/>
</dbReference>
<dbReference type="InterPro" id="IPR005874">
    <property type="entry name" value="SUI1_euk"/>
</dbReference>
<dbReference type="NCBIfam" id="TIGR01160">
    <property type="entry name" value="SUI1_MOF2"/>
    <property type="match status" value="1"/>
</dbReference>
<dbReference type="PANTHER" id="PTHR10388">
    <property type="entry name" value="EUKARYOTIC TRANSLATION INITIATION FACTOR SUI1"/>
    <property type="match status" value="1"/>
</dbReference>
<dbReference type="Pfam" id="PF01253">
    <property type="entry name" value="SUI1"/>
    <property type="match status" value="1"/>
</dbReference>
<dbReference type="PIRSF" id="PIRSF004499">
    <property type="entry name" value="SUI1_euk"/>
    <property type="match status" value="1"/>
</dbReference>
<dbReference type="SUPFAM" id="SSF55159">
    <property type="entry name" value="eIF1-like"/>
    <property type="match status" value="1"/>
</dbReference>
<dbReference type="PROSITE" id="PS50296">
    <property type="entry name" value="SUI1"/>
    <property type="match status" value="1"/>
</dbReference>
<keyword id="KW-0396">Initiation factor</keyword>
<keyword id="KW-0648">Protein biosynthesis</keyword>
<keyword id="KW-1185">Reference proteome</keyword>
<keyword id="KW-0810">Translation regulation</keyword>
<name>SUI1_ORYSJ</name>
<evidence type="ECO:0000305" key="1"/>
<sequence length="115" mass="12732">MSDLDIQIPTAFDPFAEANAGDSGAAAGSKDYVHVRIQQRNGRKSLTTVQGLKKEFSYNKILKDLKKEFCCNGTVVQDPELGQVIQLQGDQRKNVSNFLVQAGIVKKEHIKIHGF</sequence>
<comment type="function">
    <text>Probably involved in translation.</text>
</comment>
<comment type="similarity">
    <text evidence="1">Belongs to the SUI1 family.</text>
</comment>
<reference key="1">
    <citation type="submission" date="1998-09" db="EMBL/GenBank/DDBJ databases">
        <title>Molecular cloning and characterization of two translation initiation factor genes in rice.</title>
        <authorList>
            <person name="Lee J.-S."/>
            <person name="Seok S.-J."/>
            <person name="Eun M.-Y."/>
        </authorList>
    </citation>
    <scope>NUCLEOTIDE SEQUENCE [MRNA]</scope>
    <source>
        <strain>cv. Ilpoom</strain>
        <tissue>Leaf</tissue>
    </source>
</reference>
<reference key="2">
    <citation type="journal article" date="2005" name="Nature">
        <title>The map-based sequence of the rice genome.</title>
        <authorList>
            <consortium name="International rice genome sequencing project (IRGSP)"/>
        </authorList>
    </citation>
    <scope>NUCLEOTIDE SEQUENCE [LARGE SCALE GENOMIC DNA]</scope>
    <source>
        <strain>cv. Nipponbare</strain>
    </source>
</reference>
<reference key="3">
    <citation type="journal article" date="2008" name="Nucleic Acids Res.">
        <title>The rice annotation project database (RAP-DB): 2008 update.</title>
        <authorList>
            <consortium name="The rice annotation project (RAP)"/>
        </authorList>
    </citation>
    <scope>GENOME REANNOTATION</scope>
    <source>
        <strain>cv. Nipponbare</strain>
    </source>
</reference>
<reference key="4">
    <citation type="journal article" date="2013" name="Rice">
        <title>Improvement of the Oryza sativa Nipponbare reference genome using next generation sequence and optical map data.</title>
        <authorList>
            <person name="Kawahara Y."/>
            <person name="de la Bastide M."/>
            <person name="Hamilton J.P."/>
            <person name="Kanamori H."/>
            <person name="McCombie W.R."/>
            <person name="Ouyang S."/>
            <person name="Schwartz D.C."/>
            <person name="Tanaka T."/>
            <person name="Wu J."/>
            <person name="Zhou S."/>
            <person name="Childs K.L."/>
            <person name="Davidson R.M."/>
            <person name="Lin H."/>
            <person name="Quesada-Ocampo L."/>
            <person name="Vaillancourt B."/>
            <person name="Sakai H."/>
            <person name="Lee S.S."/>
            <person name="Kim J."/>
            <person name="Numa H."/>
            <person name="Itoh T."/>
            <person name="Buell C.R."/>
            <person name="Matsumoto T."/>
        </authorList>
    </citation>
    <scope>GENOME REANNOTATION</scope>
    <source>
        <strain>cv. Nipponbare</strain>
    </source>
</reference>
<organism>
    <name type="scientific">Oryza sativa subsp. japonica</name>
    <name type="common">Rice</name>
    <dbReference type="NCBI Taxonomy" id="39947"/>
    <lineage>
        <taxon>Eukaryota</taxon>
        <taxon>Viridiplantae</taxon>
        <taxon>Streptophyta</taxon>
        <taxon>Embryophyta</taxon>
        <taxon>Tracheophyta</taxon>
        <taxon>Spermatophyta</taxon>
        <taxon>Magnoliopsida</taxon>
        <taxon>Liliopsida</taxon>
        <taxon>Poales</taxon>
        <taxon>Poaceae</taxon>
        <taxon>BOP clade</taxon>
        <taxon>Oryzoideae</taxon>
        <taxon>Oryzeae</taxon>
        <taxon>Oryzinae</taxon>
        <taxon>Oryza</taxon>
        <taxon>Oryza sativa</taxon>
    </lineage>
</organism>
<accession>Q0D5W6</accession>
<accession>P33278</accession>
<accession>Q7EZD6</accession>
<protein>
    <recommendedName>
        <fullName>Protein translation factor SUI1 homolog</fullName>
    </recommendedName>
    <alternativeName>
        <fullName>Protein GOS2</fullName>
    </alternativeName>
    <alternativeName>
        <fullName>Protein eIF1</fullName>
    </alternativeName>
    <alternativeName>
        <fullName>Translation initiation factor 1</fullName>
    </alternativeName>
</protein>